<organism>
    <name type="scientific">Gallus gallus</name>
    <name type="common">Chicken</name>
    <dbReference type="NCBI Taxonomy" id="9031"/>
    <lineage>
        <taxon>Eukaryota</taxon>
        <taxon>Metazoa</taxon>
        <taxon>Chordata</taxon>
        <taxon>Craniata</taxon>
        <taxon>Vertebrata</taxon>
        <taxon>Euteleostomi</taxon>
        <taxon>Archelosauria</taxon>
        <taxon>Archosauria</taxon>
        <taxon>Dinosauria</taxon>
        <taxon>Saurischia</taxon>
        <taxon>Theropoda</taxon>
        <taxon>Coelurosauria</taxon>
        <taxon>Aves</taxon>
        <taxon>Neognathae</taxon>
        <taxon>Galloanserae</taxon>
        <taxon>Galliformes</taxon>
        <taxon>Phasianidae</taxon>
        <taxon>Phasianinae</taxon>
        <taxon>Gallus</taxon>
    </lineage>
</organism>
<name>AVID_CHICK</name>
<evidence type="ECO:0000255" key="1">
    <source>
        <dbReference type="PROSITE-ProRule" id="PRU00656"/>
    </source>
</evidence>
<evidence type="ECO:0000269" key="2">
    <source>
    </source>
</evidence>
<evidence type="ECO:0000269" key="3">
    <source>
    </source>
</evidence>
<evidence type="ECO:0000269" key="4">
    <source>
    </source>
</evidence>
<evidence type="ECO:0000305" key="5"/>
<evidence type="ECO:0007829" key="6">
    <source>
        <dbReference type="PDB" id="1VYO"/>
    </source>
</evidence>
<evidence type="ECO:0007829" key="7">
    <source>
        <dbReference type="PDB" id="2A8G"/>
    </source>
</evidence>
<comment type="function">
    <text>The biological function of avidin is not known. Forms a strong non-covalent specific complex with biotin (one molecule of biotin per subunit of avidin).</text>
</comment>
<comment type="subunit">
    <text>Homotetramer.</text>
</comment>
<comment type="subcellular location">
    <subcellularLocation>
        <location>Secreted</location>
    </subcellularLocation>
</comment>
<comment type="tissue specificity">
    <text>Synthesized in hen oviduct and concentrated in egg white (where it represents 0.05% of the total protein).</text>
</comment>
<comment type="PTM">
    <text evidence="4">N-linked glycan at Asn-41 consists of GlcNAc(beta1-2)Man(alpha1-3)[GlcNAc(beta1-4)][Man(alpha1-?)Man(alpha1-6)] Man(beta1-4)GlcNAc(beta1-4)GlcNAc.</text>
</comment>
<comment type="similarity">
    <text evidence="5">Belongs to the avidin/streptavidin family.</text>
</comment>
<protein>
    <recommendedName>
        <fullName>Avidin</fullName>
    </recommendedName>
</protein>
<gene>
    <name type="primary">AVD</name>
</gene>
<feature type="signal peptide" evidence="3 4">
    <location>
        <begin position="1"/>
        <end position="24"/>
    </location>
</feature>
<feature type="chain" id="PRO_0000002722" description="Avidin">
    <location>
        <begin position="25"/>
        <end position="152"/>
    </location>
</feature>
<feature type="domain" description="Avidin-like" evidence="1">
    <location>
        <begin position="26"/>
        <end position="149"/>
    </location>
</feature>
<feature type="binding site">
    <location>
        <position position="57"/>
    </location>
    <ligand>
        <name>biotin</name>
        <dbReference type="ChEBI" id="CHEBI:57586"/>
    </ligand>
</feature>
<feature type="glycosylation site" id="CAR_000230" description="N-linked (GlcNAc...) asparagine" evidence="4">
    <location>
        <position position="41"/>
    </location>
</feature>
<feature type="disulfide bond">
    <location>
        <begin position="28"/>
        <end position="107"/>
    </location>
</feature>
<feature type="sequence variant" description="In about 50% of the molecules." evidence="2 3">
    <original>I</original>
    <variation>T</variation>
    <location>
        <position position="58"/>
    </location>
</feature>
<feature type="sequence conflict" description="In Ref. 3; AAB59733." evidence="5" ref="3">
    <original>G</original>
    <variation>S</variation>
    <location>
        <position position="22"/>
    </location>
</feature>
<feature type="sequence conflict" description="In Ref. 4; CAC34569." evidence="5" ref="4">
    <original>T</original>
    <variation>D</variation>
    <location>
        <position position="35"/>
    </location>
</feature>
<feature type="sequence conflict" description="In Ref. 4; CAC34569." evidence="5" ref="4">
    <original>R</original>
    <variation>K</variation>
    <location>
        <position position="50"/>
    </location>
</feature>
<feature type="sequence conflict" description="In Ref. 5; AA sequence and 6; AA sequence." evidence="5" ref="5 6">
    <original>Q</original>
    <variation>E</variation>
    <location>
        <position position="77"/>
    </location>
</feature>
<feature type="strand" evidence="6">
    <location>
        <begin position="32"/>
        <end position="36"/>
    </location>
</feature>
<feature type="strand" evidence="6">
    <location>
        <begin position="41"/>
        <end position="44"/>
    </location>
</feature>
<feature type="strand" evidence="6">
    <location>
        <begin position="51"/>
        <end position="58"/>
    </location>
</feature>
<feature type="strand" evidence="6">
    <location>
        <begin position="63"/>
        <end position="66"/>
    </location>
</feature>
<feature type="strand" evidence="6">
    <location>
        <begin position="71"/>
        <end position="77"/>
    </location>
</feature>
<feature type="helix" evidence="6">
    <location>
        <begin position="80"/>
        <end position="82"/>
    </location>
</feature>
<feature type="strand" evidence="6">
    <location>
        <begin position="87"/>
        <end position="93"/>
    </location>
</feature>
<feature type="strand" evidence="6">
    <location>
        <begin position="95"/>
        <end position="98"/>
    </location>
</feature>
<feature type="strand" evidence="6">
    <location>
        <begin position="100"/>
        <end position="109"/>
    </location>
</feature>
<feature type="strand" evidence="7">
    <location>
        <begin position="111"/>
        <end position="113"/>
    </location>
</feature>
<feature type="strand" evidence="6">
    <location>
        <begin position="115"/>
        <end position="124"/>
    </location>
</feature>
<feature type="helix" evidence="6">
    <location>
        <begin position="130"/>
        <end position="135"/>
    </location>
</feature>
<feature type="strand" evidence="6">
    <location>
        <begin position="137"/>
        <end position="146"/>
    </location>
</feature>
<accession>P02701</accession>
<accession>Q91958</accession>
<accession>Q98SH4</accession>
<dbReference type="EMBL" id="X05343">
    <property type="protein sequence ID" value="CAA28954.1"/>
    <property type="molecule type" value="mRNA"/>
</dbReference>
<dbReference type="EMBL" id="L27818">
    <property type="protein sequence ID" value="AAB59733.1"/>
    <property type="molecule type" value="Genomic_DNA"/>
</dbReference>
<dbReference type="EMBL" id="AJ311647">
    <property type="protein sequence ID" value="CAC34569.1"/>
    <property type="molecule type" value="Genomic_DNA"/>
</dbReference>
<dbReference type="PIR" id="A54975">
    <property type="entry name" value="VICH"/>
</dbReference>
<dbReference type="RefSeq" id="NP_990651.1">
    <property type="nucleotide sequence ID" value="NM_205320.2"/>
</dbReference>
<dbReference type="PDB" id="1AVD">
    <property type="method" value="X-ray"/>
    <property type="resolution" value="2.70 A"/>
    <property type="chains" value="A/B=25-152"/>
</dbReference>
<dbReference type="PDB" id="1AVE">
    <property type="method" value="X-ray"/>
    <property type="resolution" value="2.80 A"/>
    <property type="chains" value="A/B=25-152"/>
</dbReference>
<dbReference type="PDB" id="1IJ8">
    <property type="method" value="X-ray"/>
    <property type="resolution" value="2.00 A"/>
    <property type="chains" value="A/B=25-152"/>
</dbReference>
<dbReference type="PDB" id="1LDO">
    <property type="method" value="X-ray"/>
    <property type="resolution" value="2.20 A"/>
    <property type="chains" value="A/B=25-152"/>
</dbReference>
<dbReference type="PDB" id="1LDQ">
    <property type="method" value="X-ray"/>
    <property type="resolution" value="2.70 A"/>
    <property type="chains" value="A/B=25-152"/>
</dbReference>
<dbReference type="PDB" id="1LEL">
    <property type="method" value="X-ray"/>
    <property type="resolution" value="2.90 A"/>
    <property type="chains" value="A/B=25-152"/>
</dbReference>
<dbReference type="PDB" id="1NQN">
    <property type="method" value="X-ray"/>
    <property type="resolution" value="1.80 A"/>
    <property type="chains" value="A/B=26-147"/>
</dbReference>
<dbReference type="PDB" id="1RAV">
    <property type="method" value="X-ray"/>
    <property type="resolution" value="2.20 A"/>
    <property type="chains" value="A/B=26-152"/>
</dbReference>
<dbReference type="PDB" id="1VYO">
    <property type="method" value="X-ray"/>
    <property type="resolution" value="1.48 A"/>
    <property type="chains" value="A/B=25-152"/>
</dbReference>
<dbReference type="PDB" id="2A5B">
    <property type="method" value="X-ray"/>
    <property type="resolution" value="2.49 A"/>
    <property type="chains" value="A/B=25-148"/>
</dbReference>
<dbReference type="PDB" id="2A5C">
    <property type="method" value="X-ray"/>
    <property type="resolution" value="2.50 A"/>
    <property type="chains" value="A/B=25-147"/>
</dbReference>
<dbReference type="PDB" id="2A8G">
    <property type="method" value="X-ray"/>
    <property type="resolution" value="1.99 A"/>
    <property type="chains" value="A/B=27-152"/>
</dbReference>
<dbReference type="PDB" id="2AVI">
    <property type="method" value="X-ray"/>
    <property type="resolution" value="3.00 A"/>
    <property type="chains" value="A/B=25-152"/>
</dbReference>
<dbReference type="PDB" id="2C4I">
    <property type="method" value="X-ray"/>
    <property type="resolution" value="1.95 A"/>
    <property type="chains" value="A=22-80"/>
</dbReference>
<dbReference type="PDB" id="2CAM">
    <property type="method" value="X-ray"/>
    <property type="resolution" value="2.20 A"/>
    <property type="chains" value="A/B=26-152"/>
</dbReference>
<dbReference type="PDB" id="2JGS">
    <property type="method" value="X-ray"/>
    <property type="resolution" value="1.90 A"/>
    <property type="chains" value="A/B/C/D=69-152"/>
</dbReference>
<dbReference type="PDB" id="2MF6">
    <property type="method" value="NMR"/>
    <property type="chains" value="A/B/C/D=25-61, A/B/C/D=85-152"/>
</dbReference>
<dbReference type="PDB" id="3FDC">
    <property type="method" value="X-ray"/>
    <property type="resolution" value="3.10 A"/>
    <property type="chains" value="A/B=25-152"/>
</dbReference>
<dbReference type="PDB" id="3MM0">
    <property type="method" value="X-ray"/>
    <property type="resolution" value="2.70 A"/>
    <property type="chains" value="A/B/C/D/E/F/G/H/I/K/M/N=25-61, A/B/C/D/E/F/G/H/I/K/M/N=85-152"/>
</dbReference>
<dbReference type="PDB" id="3VGW">
    <property type="method" value="X-ray"/>
    <property type="resolution" value="1.60 A"/>
    <property type="chains" value="A/B/C/D/E/F/G/H=25-147"/>
</dbReference>
<dbReference type="PDB" id="3VHH">
    <property type="method" value="X-ray"/>
    <property type="resolution" value="2.26 A"/>
    <property type="chains" value="A/B/C/D=25-147"/>
</dbReference>
<dbReference type="PDB" id="3VHI">
    <property type="method" value="X-ray"/>
    <property type="resolution" value="1.76 A"/>
    <property type="chains" value="A/B/C/D=26-147"/>
</dbReference>
<dbReference type="PDB" id="3VHM">
    <property type="method" value="X-ray"/>
    <property type="resolution" value="2.00 A"/>
    <property type="chains" value="A/B/C/D=25-147"/>
</dbReference>
<dbReference type="PDB" id="4I60">
    <property type="method" value="X-ray"/>
    <property type="resolution" value="2.50 A"/>
    <property type="chains" value="A=25-152"/>
</dbReference>
<dbReference type="PDB" id="4JHQ">
    <property type="method" value="X-ray"/>
    <property type="resolution" value="1.99 A"/>
    <property type="chains" value="A/B=25-152"/>
</dbReference>
<dbReference type="PDB" id="4U46">
    <property type="method" value="X-ray"/>
    <property type="resolution" value="1.95 A"/>
    <property type="chains" value="A/B=25-152"/>
</dbReference>
<dbReference type="PDB" id="5CHK">
    <property type="method" value="X-ray"/>
    <property type="resolution" value="2.20 A"/>
    <property type="chains" value="A=25-152"/>
</dbReference>
<dbReference type="PDB" id="5HLM">
    <property type="method" value="X-ray"/>
    <property type="resolution" value="2.50 A"/>
    <property type="chains" value="A/B/C/D=25-152"/>
</dbReference>
<dbReference type="PDB" id="5IRU">
    <property type="method" value="X-ray"/>
    <property type="resolution" value="2.00 A"/>
    <property type="chains" value="A/B/C/D=25-152"/>
</dbReference>
<dbReference type="PDB" id="5IRW">
    <property type="method" value="X-ray"/>
    <property type="resolution" value="2.10 A"/>
    <property type="chains" value="A/B/C/D=25-152"/>
</dbReference>
<dbReference type="PDB" id="5LUR">
    <property type="method" value="X-ray"/>
    <property type="resolution" value="2.70 A"/>
    <property type="chains" value="A/B=21-152"/>
</dbReference>
<dbReference type="PDB" id="5MYQ">
    <property type="method" value="X-ray"/>
    <property type="resolution" value="1.89 A"/>
    <property type="chains" value="A/B/C/D=25-152"/>
</dbReference>
<dbReference type="PDB" id="6XND">
    <property type="method" value="X-ray"/>
    <property type="resolution" value="1.58 A"/>
    <property type="chains" value="A/B/C/D=25-152"/>
</dbReference>
<dbReference type="PDB" id="7P4Z">
    <property type="method" value="X-ray"/>
    <property type="resolution" value="2.20 A"/>
    <property type="chains" value="A/B=27-147"/>
</dbReference>
<dbReference type="PDB" id="7ZN1">
    <property type="method" value="X-ray"/>
    <property type="resolution" value="2.33 A"/>
    <property type="chains" value="A/B/C/D=1-152"/>
</dbReference>
<dbReference type="PDB" id="7ZYL">
    <property type="method" value="EM"/>
    <property type="resolution" value="2.08 A"/>
    <property type="chains" value="A/B/C/D=1-152"/>
</dbReference>
<dbReference type="PDB" id="8CK7">
    <property type="method" value="X-ray"/>
    <property type="resolution" value="2.20 A"/>
    <property type="chains" value="A/B=25-148"/>
</dbReference>
<dbReference type="PDBsum" id="1AVD"/>
<dbReference type="PDBsum" id="1AVE"/>
<dbReference type="PDBsum" id="1IJ8"/>
<dbReference type="PDBsum" id="1LDO"/>
<dbReference type="PDBsum" id="1LDQ"/>
<dbReference type="PDBsum" id="1LEL"/>
<dbReference type="PDBsum" id="1NQN"/>
<dbReference type="PDBsum" id="1RAV"/>
<dbReference type="PDBsum" id="1VYO"/>
<dbReference type="PDBsum" id="2A5B"/>
<dbReference type="PDBsum" id="2A5C"/>
<dbReference type="PDBsum" id="2A8G"/>
<dbReference type="PDBsum" id="2AVI"/>
<dbReference type="PDBsum" id="2C4I"/>
<dbReference type="PDBsum" id="2CAM"/>
<dbReference type="PDBsum" id="2JGS"/>
<dbReference type="PDBsum" id="2MF6"/>
<dbReference type="PDBsum" id="3FDC"/>
<dbReference type="PDBsum" id="3MM0"/>
<dbReference type="PDBsum" id="3VGW"/>
<dbReference type="PDBsum" id="3VHH"/>
<dbReference type="PDBsum" id="3VHI"/>
<dbReference type="PDBsum" id="3VHM"/>
<dbReference type="PDBsum" id="4I60"/>
<dbReference type="PDBsum" id="4JHQ"/>
<dbReference type="PDBsum" id="4U46"/>
<dbReference type="PDBsum" id="5CHK"/>
<dbReference type="PDBsum" id="5HLM"/>
<dbReference type="PDBsum" id="5IRU"/>
<dbReference type="PDBsum" id="5IRW"/>
<dbReference type="PDBsum" id="5LUR"/>
<dbReference type="PDBsum" id="5MYQ"/>
<dbReference type="PDBsum" id="6XND"/>
<dbReference type="PDBsum" id="7P4Z"/>
<dbReference type="PDBsum" id="7ZN1"/>
<dbReference type="PDBsum" id="7ZYL"/>
<dbReference type="PDBsum" id="8CK7"/>
<dbReference type="EMDB" id="EMD-15026"/>
<dbReference type="PCDDB" id="P02701"/>
<dbReference type="SMR" id="P02701"/>
<dbReference type="DIP" id="DIP-60471N"/>
<dbReference type="FunCoup" id="P02701">
    <property type="interactions" value="7"/>
</dbReference>
<dbReference type="BindingDB" id="P02701"/>
<dbReference type="ChEMBL" id="CHEMBL2189156"/>
<dbReference type="GlyConnect" id="65">
    <property type="glycosylation" value="1 N-Linked glycan"/>
</dbReference>
<dbReference type="GlyCosmos" id="P02701">
    <property type="glycosylation" value="1 site, 2 glycans"/>
</dbReference>
<dbReference type="GlyGen" id="P02701">
    <property type="glycosylation" value="2 sites, 2 N-linked glycans (1 site)"/>
</dbReference>
<dbReference type="PaxDb" id="9031-ENSGALP00000003846"/>
<dbReference type="GeneID" id="396260"/>
<dbReference type="KEGG" id="gga:396260"/>
<dbReference type="CTD" id="567678"/>
<dbReference type="VEuPathDB" id="HostDB:geneid_396260"/>
<dbReference type="eggNOG" id="ENOG502S55G">
    <property type="taxonomic scope" value="Eukaryota"/>
</dbReference>
<dbReference type="HOGENOM" id="CLU_122441_0_0_1"/>
<dbReference type="InParanoid" id="P02701"/>
<dbReference type="OMA" id="WKFSEST"/>
<dbReference type="OrthoDB" id="2821340at2759"/>
<dbReference type="PhylomeDB" id="P02701"/>
<dbReference type="TreeFam" id="TF336756"/>
<dbReference type="BioCyc" id="MetaCyc:MONOMER-5341"/>
<dbReference type="EvolutionaryTrace" id="P02701"/>
<dbReference type="PRO" id="PR:P02701"/>
<dbReference type="Proteomes" id="UP000000539">
    <property type="component" value="Chromosome Z"/>
</dbReference>
<dbReference type="Bgee" id="ENSGALG00000025945">
    <property type="expression patterns" value="Expressed in granulocyte and 11 other cell types or tissues"/>
</dbReference>
<dbReference type="GO" id="GO:0005576">
    <property type="term" value="C:extracellular region"/>
    <property type="evidence" value="ECO:0007669"/>
    <property type="project" value="UniProtKB-SubCell"/>
</dbReference>
<dbReference type="GO" id="GO:0009374">
    <property type="term" value="F:biotin binding"/>
    <property type="evidence" value="ECO:0000318"/>
    <property type="project" value="GO_Central"/>
</dbReference>
<dbReference type="GO" id="GO:0019731">
    <property type="term" value="P:antibacterial humoral response"/>
    <property type="evidence" value="ECO:0000303"/>
    <property type="project" value="AgBase"/>
</dbReference>
<dbReference type="Gene3D" id="2.40.128.30">
    <property type="entry name" value="Avidin-like"/>
    <property type="match status" value="1"/>
</dbReference>
<dbReference type="InterPro" id="IPR005469">
    <property type="entry name" value="Avidin"/>
</dbReference>
<dbReference type="InterPro" id="IPR017889">
    <property type="entry name" value="Avidin-like_CS"/>
</dbReference>
<dbReference type="InterPro" id="IPR036896">
    <property type="entry name" value="Avidin-like_sf"/>
</dbReference>
<dbReference type="InterPro" id="IPR005468">
    <property type="entry name" value="Avidin/str"/>
</dbReference>
<dbReference type="InterPro" id="IPR051764">
    <property type="entry name" value="Avidin/Streptavidin-rel"/>
</dbReference>
<dbReference type="PANTHER" id="PTHR34399:SF3">
    <property type="entry name" value="AVID PROTEIN-RELATED"/>
    <property type="match status" value="1"/>
</dbReference>
<dbReference type="PANTHER" id="PTHR34399">
    <property type="entry name" value="AVIDIN-RELATED"/>
    <property type="match status" value="1"/>
</dbReference>
<dbReference type="Pfam" id="PF01382">
    <property type="entry name" value="Avidin"/>
    <property type="match status" value="1"/>
</dbReference>
<dbReference type="PRINTS" id="PR00709">
    <property type="entry name" value="AVIDIN"/>
</dbReference>
<dbReference type="SUPFAM" id="SSF50876">
    <property type="entry name" value="Avidin/streptavidin"/>
    <property type="match status" value="1"/>
</dbReference>
<dbReference type="PROSITE" id="PS00577">
    <property type="entry name" value="AVIDIN_1"/>
    <property type="match status" value="1"/>
</dbReference>
<dbReference type="PROSITE" id="PS51326">
    <property type="entry name" value="AVIDIN_2"/>
    <property type="match status" value="1"/>
</dbReference>
<keyword id="KW-0002">3D-structure</keyword>
<keyword id="KW-0092">Biotin</keyword>
<keyword id="KW-0903">Direct protein sequencing</keyword>
<keyword id="KW-1015">Disulfide bond</keyword>
<keyword id="KW-0325">Glycoprotein</keyword>
<keyword id="KW-1185">Reference proteome</keyword>
<keyword id="KW-0964">Secreted</keyword>
<keyword id="KW-0732">Signal</keyword>
<reference key="1">
    <citation type="journal article" date="1987" name="Nucleic Acids Res.">
        <title>Molecular cloning of the chicken avidin cDNA.</title>
        <authorList>
            <person name="Gope M.L."/>
            <person name="Keinaenen R.A."/>
            <person name="Kristo P.A."/>
            <person name="Conneely O.M."/>
            <person name="Beatie W.G."/>
            <person name="Zarucki-Schulz T."/>
            <person name="O'Malley B.W."/>
            <person name="Kulomaa M.S."/>
        </authorList>
    </citation>
    <scope>NUCLEOTIDE SEQUENCE [MRNA]</scope>
</reference>
<reference key="2">
    <citation type="journal article" date="1990" name="Methods Enzymol.">
        <title>Cloning and expression of avidin in Escherichia coli.</title>
        <authorList>
            <person name="Chandra G."/>
            <person name="Gray J.G."/>
        </authorList>
    </citation>
    <scope>NUCLEOTIDE SEQUENCE [MRNA]</scope>
</reference>
<reference key="3">
    <citation type="journal article" date="1995" name="Gene">
        <title>Cloning and sequencing of the chicken egg-white avidin-encoding gene and its relationship with the avidin-related genes Avr1-Avr5.</title>
        <authorList>
            <person name="Wallen M.J."/>
            <person name="Laukkanen M.O."/>
            <person name="Kulomaa M.S."/>
        </authorList>
    </citation>
    <scope>NUCLEOTIDE SEQUENCE [GENOMIC DNA]</scope>
    <source>
        <strain>White leghorn</strain>
        <tissue>Oviduct</tissue>
    </source>
</reference>
<reference key="4">
    <citation type="journal article" date="2000" name="Anim. Genet.">
        <title>Characterization and chromosomal localization of the chicken avidin gene family.</title>
        <authorList>
            <person name="Ahlroth M.K."/>
            <person name="Kola E.H."/>
            <person name="Ewald D."/>
            <person name="Masabanda J."/>
            <person name="Sazanov A."/>
            <person name="Fries R."/>
            <person name="Kulomaa M.S."/>
        </authorList>
    </citation>
    <scope>NUCLEOTIDE SEQUENCE [GENOMIC DNA]</scope>
    <scope>VARIANT THR-58</scope>
</reference>
<reference key="5">
    <citation type="journal article" date="1971" name="J. Biol. Chem.">
        <title>Egg white avidin. 3. Sequence of the 78-residue middle cyanogen bromide peptide. Complete amino acid sequence of the protein subunit.</title>
        <authorList>
            <person name="Delange R.J."/>
            <person name="Huang T.-S."/>
        </authorList>
    </citation>
    <scope>PROTEIN SEQUENCE OF 25-152</scope>
    <scope>GLYCOSYLATION AT ASN-41</scope>
</reference>
<reference key="6">
    <citation type="journal article" date="1971" name="J. Biol. Chem.">
        <title>Egg white avidin. II. Isolation, composition, and amino acid sequences of the tryptic peptides.</title>
        <authorList>
            <person name="Huang T.-S."/>
            <person name="DeLange R.J."/>
        </authorList>
    </citation>
    <scope>PROTEIN SEQUENCE OF 25-152</scope>
    <scope>VARIANT THR-58</scope>
</reference>
<reference key="7">
    <citation type="journal article" date="1990" name="Biochem. J.">
        <title>Studies on the biotin-binding sites of avidin and streptavidin. Tyrosine residues are involved in the binding site.</title>
        <authorList>
            <person name="Gitlin G."/>
            <person name="Bayer E.A."/>
            <person name="Wilchek M."/>
        </authorList>
    </citation>
    <scope>IMPORTANCE OF TYR IN BIOTIN-BINDING</scope>
</reference>
<reference key="8">
    <citation type="journal article" date="1991" name="Biochem. J.">
        <title>Studies on the biotin-binding site of avidin. Minimized fragments that bind biotin.</title>
        <authorList>
            <person name="Hiller Y."/>
            <person name="Bayer E.A."/>
            <person name="Wilchek M."/>
        </authorList>
    </citation>
    <scope>BIOTIN-BINDING STUDIES</scope>
</reference>
<reference key="9">
    <citation type="journal article" date="1982" name="Biochemistry">
        <title>Compositional and structural heterogeneity of avidin glycopeptides.</title>
        <authorList>
            <person name="Bruch R.C."/>
            <person name="White H.B. III"/>
        </authorList>
    </citation>
    <scope>STRUCTURE OF CARBOHYDRATE</scope>
</reference>
<reference key="10">
    <citation type="journal article" date="1993" name="Proc. Natl. Acad. Sci. U.S.A.">
        <title>Three-dimensional structures of avidin and the avidin-biotin complex.</title>
        <authorList>
            <person name="Livnah O."/>
            <person name="Bayer E.A."/>
            <person name="Wilchek M."/>
            <person name="Sussman J.L."/>
        </authorList>
    </citation>
    <scope>X-RAY CRYSTALLOGRAPHY (2.6 ANGSTROMS)</scope>
</reference>
<reference key="11">
    <citation type="journal article" date="1993" name="J. Mol. Biol.">
        <title>Three-dimensional structure of the tetragonal crystal form of egg-white avidin in its functional complex with biotin at 2.7-A resolution.</title>
        <authorList>
            <person name="Pugliese L."/>
            <person name="Coda A."/>
            <person name="Malcovati M."/>
            <person name="Bolognesi M."/>
        </authorList>
    </citation>
    <scope>X-RAY CRYSTALLOGRAPHY (2.7 ANGSTROMS)</scope>
</reference>
<reference key="12">
    <citation type="journal article" date="1998" name="Eur. J. Biochem.">
        <title>Biochemical characterization and crystal structure of a recombinant hen avidin and its acidic mutant expressed in Escherichia coli.</title>
        <authorList>
            <person name="Nardone E."/>
            <person name="Rosano C."/>
            <person name="Santambrogio P."/>
            <person name="Curnis F."/>
            <person name="Corti A."/>
            <person name="Magni F."/>
            <person name="Siccardi A.G."/>
            <person name="Paganelli G."/>
            <person name="Losso R."/>
            <person name="Apreda B."/>
            <person name="Bolognesi M."/>
            <person name="Sidoli A."/>
            <person name="Arosio P."/>
        </authorList>
    </citation>
    <scope>X-RAY CRYSTALLOGRAPHY (2.2 ANGSTROMS)</scope>
</reference>
<sequence>MVHATSPLLLLLLLSLALVAPGLSARKCSLTGKWTNDLGSNMTIGAVNSRGEFTGTYITAVTATSNEIKESPLHGTQNTINKRTQPTFGFTVNWKFSESTTVFTGQCFIDRNGKEVLKTMWLLRSSVNDIGDDWKATRVGINIFTRLRTQKE</sequence>
<proteinExistence type="evidence at protein level"/>